<name>MNMA_CUPNH</name>
<reference key="1">
    <citation type="journal article" date="2006" name="Nat. Biotechnol.">
        <title>Genome sequence of the bioplastic-producing 'Knallgas' bacterium Ralstonia eutropha H16.</title>
        <authorList>
            <person name="Pohlmann A."/>
            <person name="Fricke W.F."/>
            <person name="Reinecke F."/>
            <person name="Kusian B."/>
            <person name="Liesegang H."/>
            <person name="Cramm R."/>
            <person name="Eitinger T."/>
            <person name="Ewering C."/>
            <person name="Poetter M."/>
            <person name="Schwartz E."/>
            <person name="Strittmatter A."/>
            <person name="Voss I."/>
            <person name="Gottschalk G."/>
            <person name="Steinbuechel A."/>
            <person name="Friedrich B."/>
            <person name="Bowien B."/>
        </authorList>
    </citation>
    <scope>NUCLEOTIDE SEQUENCE [LARGE SCALE GENOMIC DNA]</scope>
    <source>
        <strain>ATCC 17699 / DSM 428 / KCTC 22496 / NCIMB 10442 / H16 / Stanier 337</strain>
    </source>
</reference>
<feature type="chain" id="PRO_1000009561" description="tRNA-specific 2-thiouridylase MnmA">
    <location>
        <begin position="1"/>
        <end position="361"/>
    </location>
</feature>
<feature type="region of interest" description="Interaction with target base in tRNA" evidence="1">
    <location>
        <begin position="97"/>
        <end position="99"/>
    </location>
</feature>
<feature type="region of interest" description="Interaction with tRNA" evidence="1">
    <location>
        <begin position="149"/>
        <end position="151"/>
    </location>
</feature>
<feature type="region of interest" description="Interaction with tRNA" evidence="1">
    <location>
        <begin position="311"/>
        <end position="312"/>
    </location>
</feature>
<feature type="active site" description="Nucleophile" evidence="1">
    <location>
        <position position="102"/>
    </location>
</feature>
<feature type="active site" description="Cysteine persulfide intermediate" evidence="1">
    <location>
        <position position="199"/>
    </location>
</feature>
<feature type="binding site" evidence="1">
    <location>
        <begin position="11"/>
        <end position="18"/>
    </location>
    <ligand>
        <name>ATP</name>
        <dbReference type="ChEBI" id="CHEBI:30616"/>
    </ligand>
</feature>
<feature type="binding site" evidence="1">
    <location>
        <position position="37"/>
    </location>
    <ligand>
        <name>ATP</name>
        <dbReference type="ChEBI" id="CHEBI:30616"/>
    </ligand>
</feature>
<feature type="binding site" evidence="1">
    <location>
        <position position="126"/>
    </location>
    <ligand>
        <name>ATP</name>
        <dbReference type="ChEBI" id="CHEBI:30616"/>
    </ligand>
</feature>
<feature type="site" description="Interaction with tRNA" evidence="1">
    <location>
        <position position="127"/>
    </location>
</feature>
<feature type="site" description="Interaction with tRNA" evidence="1">
    <location>
        <position position="344"/>
    </location>
</feature>
<feature type="disulfide bond" description="Alternate" evidence="1">
    <location>
        <begin position="102"/>
        <end position="199"/>
    </location>
</feature>
<sequence length="361" mass="39395">MSGAGKRVVVGMSGGVDSSVTAWLLKQQGYEVIGLFMKNWEDDDDSEYCSTRQDWLDVVSVADLIGVDVEAVNFAAEYKDRVFADFLREYSAGRTPNPDVLCNAEIKFKAFLDHAMSLGAETIATGHYARVRQNAAGRFELLKALDHTKDQSYFLHRLNQAQLSRTLFPLGEIPKTRVREIAAEIGLPNAKKKDSTGICFIGERPFRDFLNRYLPTKPGPMKTPEGKVVGEHIGLAFYTLGQRKGIGLGGSREGNGDAWYVARKDMANNTLYVVQGHDHPWLLTPVLTASDLSWVAGEPPAAGAAMAAKTRYRQSDAACTVQAVDGDALTLRFAEAQWAVTPGQSAVLYDGDICLGGGIIQ</sequence>
<organism>
    <name type="scientific">Cupriavidus necator (strain ATCC 17699 / DSM 428 / KCTC 22496 / NCIMB 10442 / H16 / Stanier 337)</name>
    <name type="common">Ralstonia eutropha</name>
    <dbReference type="NCBI Taxonomy" id="381666"/>
    <lineage>
        <taxon>Bacteria</taxon>
        <taxon>Pseudomonadati</taxon>
        <taxon>Pseudomonadota</taxon>
        <taxon>Betaproteobacteria</taxon>
        <taxon>Burkholderiales</taxon>
        <taxon>Burkholderiaceae</taxon>
        <taxon>Cupriavidus</taxon>
    </lineage>
</organism>
<gene>
    <name evidence="1" type="primary">mnmA</name>
    <name type="synonym">trmU</name>
    <name type="ordered locus">H16_A3126</name>
</gene>
<protein>
    <recommendedName>
        <fullName evidence="1">tRNA-specific 2-thiouridylase MnmA</fullName>
        <ecNumber evidence="1">2.8.1.13</ecNumber>
    </recommendedName>
</protein>
<evidence type="ECO:0000255" key="1">
    <source>
        <dbReference type="HAMAP-Rule" id="MF_00144"/>
    </source>
</evidence>
<comment type="function">
    <text evidence="1">Catalyzes the 2-thiolation of uridine at the wobble position (U34) of tRNA, leading to the formation of s(2)U34.</text>
</comment>
<comment type="catalytic activity">
    <reaction evidence="1">
        <text>S-sulfanyl-L-cysteinyl-[protein] + uridine(34) in tRNA + AH2 + ATP = 2-thiouridine(34) in tRNA + L-cysteinyl-[protein] + A + AMP + diphosphate + H(+)</text>
        <dbReference type="Rhea" id="RHEA:47032"/>
        <dbReference type="Rhea" id="RHEA-COMP:10131"/>
        <dbReference type="Rhea" id="RHEA-COMP:11726"/>
        <dbReference type="Rhea" id="RHEA-COMP:11727"/>
        <dbReference type="Rhea" id="RHEA-COMP:11728"/>
        <dbReference type="ChEBI" id="CHEBI:13193"/>
        <dbReference type="ChEBI" id="CHEBI:15378"/>
        <dbReference type="ChEBI" id="CHEBI:17499"/>
        <dbReference type="ChEBI" id="CHEBI:29950"/>
        <dbReference type="ChEBI" id="CHEBI:30616"/>
        <dbReference type="ChEBI" id="CHEBI:33019"/>
        <dbReference type="ChEBI" id="CHEBI:61963"/>
        <dbReference type="ChEBI" id="CHEBI:65315"/>
        <dbReference type="ChEBI" id="CHEBI:87170"/>
        <dbReference type="ChEBI" id="CHEBI:456215"/>
        <dbReference type="EC" id="2.8.1.13"/>
    </reaction>
</comment>
<comment type="subcellular location">
    <subcellularLocation>
        <location evidence="1">Cytoplasm</location>
    </subcellularLocation>
</comment>
<comment type="similarity">
    <text evidence="1">Belongs to the MnmA/TRMU family.</text>
</comment>
<keyword id="KW-0067">ATP-binding</keyword>
<keyword id="KW-0963">Cytoplasm</keyword>
<keyword id="KW-1015">Disulfide bond</keyword>
<keyword id="KW-0547">Nucleotide-binding</keyword>
<keyword id="KW-1185">Reference proteome</keyword>
<keyword id="KW-0694">RNA-binding</keyword>
<keyword id="KW-0808">Transferase</keyword>
<keyword id="KW-0819">tRNA processing</keyword>
<keyword id="KW-0820">tRNA-binding</keyword>
<dbReference type="EC" id="2.8.1.13" evidence="1"/>
<dbReference type="EMBL" id="AM260479">
    <property type="protein sequence ID" value="CAJ94201.1"/>
    <property type="molecule type" value="Genomic_DNA"/>
</dbReference>
<dbReference type="SMR" id="Q0K720"/>
<dbReference type="STRING" id="381666.H16_A3126"/>
<dbReference type="KEGG" id="reh:H16_A3126"/>
<dbReference type="eggNOG" id="COG0482">
    <property type="taxonomic scope" value="Bacteria"/>
</dbReference>
<dbReference type="HOGENOM" id="CLU_035188_1_0_4"/>
<dbReference type="OrthoDB" id="9800696at2"/>
<dbReference type="Proteomes" id="UP000008210">
    <property type="component" value="Chromosome 1"/>
</dbReference>
<dbReference type="GO" id="GO:0005737">
    <property type="term" value="C:cytoplasm"/>
    <property type="evidence" value="ECO:0007669"/>
    <property type="project" value="UniProtKB-SubCell"/>
</dbReference>
<dbReference type="GO" id="GO:0005524">
    <property type="term" value="F:ATP binding"/>
    <property type="evidence" value="ECO:0007669"/>
    <property type="project" value="UniProtKB-KW"/>
</dbReference>
<dbReference type="GO" id="GO:0000049">
    <property type="term" value="F:tRNA binding"/>
    <property type="evidence" value="ECO:0007669"/>
    <property type="project" value="UniProtKB-KW"/>
</dbReference>
<dbReference type="GO" id="GO:0103016">
    <property type="term" value="F:tRNA-uridine 2-sulfurtransferase activity"/>
    <property type="evidence" value="ECO:0007669"/>
    <property type="project" value="UniProtKB-EC"/>
</dbReference>
<dbReference type="GO" id="GO:0002143">
    <property type="term" value="P:tRNA wobble position uridine thiolation"/>
    <property type="evidence" value="ECO:0007669"/>
    <property type="project" value="TreeGrafter"/>
</dbReference>
<dbReference type="CDD" id="cd01998">
    <property type="entry name" value="MnmA_TRMU-like"/>
    <property type="match status" value="1"/>
</dbReference>
<dbReference type="FunFam" id="2.30.30.280:FF:000001">
    <property type="entry name" value="tRNA-specific 2-thiouridylase MnmA"/>
    <property type="match status" value="1"/>
</dbReference>
<dbReference type="FunFam" id="2.40.30.10:FF:000023">
    <property type="entry name" value="tRNA-specific 2-thiouridylase MnmA"/>
    <property type="match status" value="1"/>
</dbReference>
<dbReference type="FunFam" id="3.40.50.620:FF:000004">
    <property type="entry name" value="tRNA-specific 2-thiouridylase MnmA"/>
    <property type="match status" value="1"/>
</dbReference>
<dbReference type="Gene3D" id="2.30.30.280">
    <property type="entry name" value="Adenine nucleotide alpha hydrolases-like domains"/>
    <property type="match status" value="1"/>
</dbReference>
<dbReference type="Gene3D" id="3.40.50.620">
    <property type="entry name" value="HUPs"/>
    <property type="match status" value="1"/>
</dbReference>
<dbReference type="Gene3D" id="2.40.30.10">
    <property type="entry name" value="Translation factors"/>
    <property type="match status" value="1"/>
</dbReference>
<dbReference type="HAMAP" id="MF_00144">
    <property type="entry name" value="tRNA_thiouridyl_MnmA"/>
    <property type="match status" value="1"/>
</dbReference>
<dbReference type="InterPro" id="IPR004506">
    <property type="entry name" value="MnmA-like"/>
</dbReference>
<dbReference type="InterPro" id="IPR046885">
    <property type="entry name" value="MnmA-like_C"/>
</dbReference>
<dbReference type="InterPro" id="IPR046884">
    <property type="entry name" value="MnmA-like_central"/>
</dbReference>
<dbReference type="InterPro" id="IPR023382">
    <property type="entry name" value="MnmA-like_central_sf"/>
</dbReference>
<dbReference type="InterPro" id="IPR014729">
    <property type="entry name" value="Rossmann-like_a/b/a_fold"/>
</dbReference>
<dbReference type="NCBIfam" id="NF001138">
    <property type="entry name" value="PRK00143.1"/>
    <property type="match status" value="1"/>
</dbReference>
<dbReference type="NCBIfam" id="TIGR00420">
    <property type="entry name" value="trmU"/>
    <property type="match status" value="1"/>
</dbReference>
<dbReference type="PANTHER" id="PTHR11933:SF5">
    <property type="entry name" value="MITOCHONDRIAL TRNA-SPECIFIC 2-THIOURIDYLASE 1"/>
    <property type="match status" value="1"/>
</dbReference>
<dbReference type="PANTHER" id="PTHR11933">
    <property type="entry name" value="TRNA 5-METHYLAMINOMETHYL-2-THIOURIDYLATE -METHYLTRANSFERASE"/>
    <property type="match status" value="1"/>
</dbReference>
<dbReference type="Pfam" id="PF03054">
    <property type="entry name" value="tRNA_Me_trans"/>
    <property type="match status" value="1"/>
</dbReference>
<dbReference type="Pfam" id="PF20258">
    <property type="entry name" value="tRNA_Me_trans_C"/>
    <property type="match status" value="1"/>
</dbReference>
<dbReference type="Pfam" id="PF20259">
    <property type="entry name" value="tRNA_Me_trans_M"/>
    <property type="match status" value="1"/>
</dbReference>
<dbReference type="SUPFAM" id="SSF52402">
    <property type="entry name" value="Adenine nucleotide alpha hydrolases-like"/>
    <property type="match status" value="1"/>
</dbReference>
<accession>Q0K720</accession>
<proteinExistence type="inferred from homology"/>